<sequence length="888" mass="100960">MELSLSPKETEIRPNTIPDLKVDATFRKVAKHAITFAIWKIDEDRLEAVQRSHYGTFYDSCAYIIYAASLSGHYANHETITREQKPNVSLERYIHYWLGKNVSEQNRSNVVHKIQELDSYLGNISSIYRETQNLESARFLSYFKKGYDVRSGALISAPQRPRLFQLYARKWLRSIEVATIDWSHFNSDYVMVLQTDNLTYVWIGRSSSGIERRSALDWVQKHCSGSPITIVDDGYEQAMSQEHKELWNTMLPLKKRMVCQASQLVSEYADYNSNKFRIYKCNQRGRLHLDQLDVGMPAKDDLSDAHGVYLLDNYGQSIWLWVGGQAPQADALSAMGNGRAFVKKKKYPDNTLVVRVLEGHEPVEFKRLFANWLNVWQENTRGHKPVSTKFGKLDAHSLCERPKMAADTQLVDDGRGERVIYRVFGDQVQEVPISKTVVFTTNASFVVKYSVQCATVVPADLASVGIKTIIYQWNGSEASVESISRADKFAKASFDGLKEPGMFVQLYEFDEPPHFLQIFEGKLIIRRGQRTEMPYNGNSNALLDTFLLKVYGDASYNAKAVEETHLSSISSKDCYVIKTNHVWVWCGQSSTGDAREMAKAVGALMGENSLVLEGKESKEFWQSVAMYFNQTLVINGNGNSCSSSTSSSSGAGSMCNGSSNGGNISPTLSNNCYLNTSVPSKPRPPVQLFLVWWQQSSLRYEEILGFDQQDLSSDCTYILDTGSLTYVWLGSQAPNQERYTAIAQSYVQNAPFGRRSATALAVVRQFQEPNVFKGFFESWQNDYGKNFHSYEKMRKDLGNKVTSNCCFASEGSALILNNRQKDFDGHKKYPLTVLIQEMDMLPPDINPLKREVHLTHDDFVSVFNMSFYEFDELPKWKKMELKKQFKLF</sequence>
<feature type="chain" id="PRO_0000218742" description="Villin-like protein quail">
    <location>
        <begin position="1"/>
        <end position="888"/>
    </location>
</feature>
<feature type="repeat" description="Gelsolin-like">
    <location>
        <begin position="307"/>
        <end position="366"/>
    </location>
</feature>
<feature type="domain" description="HP" evidence="1">
    <location>
        <begin position="823"/>
        <end position="888"/>
    </location>
</feature>
<feature type="splice variant" id="VSP_034369" description="In isoform A." evidence="3 4">
    <original>ELSLSPKET</original>
    <variation>PPFNFIKQ</variation>
    <location>
        <begin position="2"/>
        <end position="10"/>
    </location>
</feature>
<protein>
    <recommendedName>
        <fullName>Villin-like protein quail</fullName>
    </recommendedName>
</protein>
<accession>Q23989</accession>
<accession>Q540V4</accession>
<accession>Q8INY7</accession>
<accession>Q9VJC9</accession>
<name>QUAI_DROME</name>
<proteinExistence type="evidence at transcript level"/>
<organism>
    <name type="scientific">Drosophila melanogaster</name>
    <name type="common">Fruit fly</name>
    <dbReference type="NCBI Taxonomy" id="7227"/>
    <lineage>
        <taxon>Eukaryota</taxon>
        <taxon>Metazoa</taxon>
        <taxon>Ecdysozoa</taxon>
        <taxon>Arthropoda</taxon>
        <taxon>Hexapoda</taxon>
        <taxon>Insecta</taxon>
        <taxon>Pterygota</taxon>
        <taxon>Neoptera</taxon>
        <taxon>Endopterygota</taxon>
        <taxon>Diptera</taxon>
        <taxon>Brachycera</taxon>
        <taxon>Muscomorpha</taxon>
        <taxon>Ephydroidea</taxon>
        <taxon>Drosophilidae</taxon>
        <taxon>Drosophila</taxon>
        <taxon>Sophophora</taxon>
    </lineage>
</organism>
<gene>
    <name type="primary">qua</name>
    <name type="ORF">CG6433</name>
</gene>
<evidence type="ECO:0000255" key="1">
    <source>
        <dbReference type="PROSITE-ProRule" id="PRU00595"/>
    </source>
</evidence>
<evidence type="ECO:0000269" key="2">
    <source>
    </source>
</evidence>
<evidence type="ECO:0000303" key="3">
    <source>
    </source>
</evidence>
<evidence type="ECO:0000303" key="4">
    <source>
    </source>
</evidence>
<evidence type="ECO:0000305" key="5"/>
<dbReference type="EMBL" id="U10070">
    <property type="protein sequence ID" value="AAC13765.1"/>
    <property type="molecule type" value="mRNA"/>
</dbReference>
<dbReference type="EMBL" id="AE014134">
    <property type="protein sequence ID" value="AAF53623.1"/>
    <property type="molecule type" value="Genomic_DNA"/>
</dbReference>
<dbReference type="EMBL" id="AE014134">
    <property type="protein sequence ID" value="AAN10991.1"/>
    <property type="molecule type" value="Genomic_DNA"/>
</dbReference>
<dbReference type="EMBL" id="AY121684">
    <property type="protein sequence ID" value="AAM52011.1"/>
    <property type="molecule type" value="mRNA"/>
</dbReference>
<dbReference type="PIR" id="A54832">
    <property type="entry name" value="A54832"/>
</dbReference>
<dbReference type="RefSeq" id="NP_724060.1">
    <molecule id="Q23989-2"/>
    <property type="nucleotide sequence ID" value="NM_165222.2"/>
</dbReference>
<dbReference type="RefSeq" id="NP_724061.1">
    <molecule id="Q23989-1"/>
    <property type="nucleotide sequence ID" value="NM_165223.3"/>
</dbReference>
<dbReference type="SMR" id="Q23989"/>
<dbReference type="BioGRID" id="61054">
    <property type="interactions" value="5"/>
</dbReference>
<dbReference type="IntAct" id="Q23989">
    <property type="interactions" value="3"/>
</dbReference>
<dbReference type="STRING" id="7227.FBpp0297295"/>
<dbReference type="PaxDb" id="7227-FBpp0297295"/>
<dbReference type="DNASU" id="35058"/>
<dbReference type="EnsemblMetazoa" id="FBtr0080996">
    <molecule id="Q23989-2"/>
    <property type="protein sequence ID" value="FBpp0080549"/>
    <property type="gene ID" value="FBgn0003187"/>
</dbReference>
<dbReference type="EnsemblMetazoa" id="FBtr0080997">
    <molecule id="Q23989-1"/>
    <property type="protein sequence ID" value="FBpp0080550"/>
    <property type="gene ID" value="FBgn0003187"/>
</dbReference>
<dbReference type="GeneID" id="35058"/>
<dbReference type="KEGG" id="dme:Dmel_CG6433"/>
<dbReference type="AGR" id="FB:FBgn0003187"/>
<dbReference type="CTD" id="35058"/>
<dbReference type="FlyBase" id="FBgn0003187">
    <property type="gene designation" value="qua"/>
</dbReference>
<dbReference type="VEuPathDB" id="VectorBase:FBgn0003187"/>
<dbReference type="eggNOG" id="KOG0443">
    <property type="taxonomic scope" value="Eukaryota"/>
</dbReference>
<dbReference type="InParanoid" id="Q23989"/>
<dbReference type="OrthoDB" id="6375767at2759"/>
<dbReference type="PhylomeDB" id="Q23989"/>
<dbReference type="Reactome" id="R-DME-264870">
    <property type="pathway name" value="Caspase-mediated cleavage of cytoskeletal proteins"/>
</dbReference>
<dbReference type="Reactome" id="R-DME-6798695">
    <property type="pathway name" value="Neutrophil degranulation"/>
</dbReference>
<dbReference type="SignaLink" id="Q23989"/>
<dbReference type="BioGRID-ORCS" id="35058">
    <property type="hits" value="0 hits in 3 CRISPR screens"/>
</dbReference>
<dbReference type="GenomeRNAi" id="35058"/>
<dbReference type="PRO" id="PR:Q23989"/>
<dbReference type="Proteomes" id="UP000000803">
    <property type="component" value="Chromosome 2L"/>
</dbReference>
<dbReference type="Bgee" id="FBgn0003187">
    <property type="expression patterns" value="Expressed in dorsal appendage forming follicle cell in ovary and 60 other cell types or tissues"/>
</dbReference>
<dbReference type="ExpressionAtlas" id="Q23989">
    <property type="expression patterns" value="baseline and differential"/>
</dbReference>
<dbReference type="GO" id="GO:0015629">
    <property type="term" value="C:actin cytoskeleton"/>
    <property type="evidence" value="ECO:0000318"/>
    <property type="project" value="GO_Central"/>
</dbReference>
<dbReference type="GO" id="GO:0005737">
    <property type="term" value="C:cytoplasm"/>
    <property type="evidence" value="ECO:0000314"/>
    <property type="project" value="FlyBase"/>
</dbReference>
<dbReference type="GO" id="GO:0003779">
    <property type="term" value="F:actin binding"/>
    <property type="evidence" value="ECO:0000314"/>
    <property type="project" value="FlyBase"/>
</dbReference>
<dbReference type="GO" id="GO:0051015">
    <property type="term" value="F:actin filament binding"/>
    <property type="evidence" value="ECO:0000318"/>
    <property type="project" value="GO_Central"/>
</dbReference>
<dbReference type="GO" id="GO:0005509">
    <property type="term" value="F:calcium ion binding"/>
    <property type="evidence" value="ECO:0000250"/>
    <property type="project" value="FlyBase"/>
</dbReference>
<dbReference type="GO" id="GO:0005546">
    <property type="term" value="F:phosphatidylinositol-4,5-bisphosphate binding"/>
    <property type="evidence" value="ECO:0000318"/>
    <property type="project" value="GO_Central"/>
</dbReference>
<dbReference type="GO" id="GO:0051014">
    <property type="term" value="P:actin filament severing"/>
    <property type="evidence" value="ECO:0000318"/>
    <property type="project" value="GO_Central"/>
</dbReference>
<dbReference type="GO" id="GO:0008154">
    <property type="term" value="P:actin polymerization or depolymerization"/>
    <property type="evidence" value="ECO:0000318"/>
    <property type="project" value="GO_Central"/>
</dbReference>
<dbReference type="GO" id="GO:0051016">
    <property type="term" value="P:barbed-end actin filament capping"/>
    <property type="evidence" value="ECO:0000318"/>
    <property type="project" value="GO_Central"/>
</dbReference>
<dbReference type="GO" id="GO:0035317">
    <property type="term" value="P:imaginal disc-derived wing hair organization"/>
    <property type="evidence" value="ECO:0000315"/>
    <property type="project" value="FlyBase"/>
</dbReference>
<dbReference type="GO" id="GO:0007300">
    <property type="term" value="P:ovarian nurse cell to oocyte transport"/>
    <property type="evidence" value="ECO:0007001"/>
    <property type="project" value="FlyBase"/>
</dbReference>
<dbReference type="CDD" id="cd11280">
    <property type="entry name" value="gelsolin_like"/>
    <property type="match status" value="2"/>
</dbReference>
<dbReference type="CDD" id="cd11292">
    <property type="entry name" value="gelsolin_S3_like"/>
    <property type="match status" value="1"/>
</dbReference>
<dbReference type="FunFam" id="3.40.20.10:FF:000055">
    <property type="entry name" value="Quail, isoform C"/>
    <property type="match status" value="1"/>
</dbReference>
<dbReference type="FunFam" id="3.40.20.10:FF:000056">
    <property type="entry name" value="Quail, isoform C"/>
    <property type="match status" value="1"/>
</dbReference>
<dbReference type="FunFam" id="3.40.20.10:FF:000058">
    <property type="entry name" value="Quail, isoform C"/>
    <property type="match status" value="1"/>
</dbReference>
<dbReference type="FunFam" id="3.40.20.10:FF:000061">
    <property type="entry name" value="Quail, isoform C"/>
    <property type="match status" value="1"/>
</dbReference>
<dbReference type="Gene3D" id="3.40.20.10">
    <property type="entry name" value="Severin"/>
    <property type="match status" value="6"/>
</dbReference>
<dbReference type="Gene3D" id="1.10.950.10">
    <property type="entry name" value="Villin headpiece domain"/>
    <property type="match status" value="1"/>
</dbReference>
<dbReference type="InterPro" id="IPR029006">
    <property type="entry name" value="ADF-H/Gelsolin-like_dom_sf"/>
</dbReference>
<dbReference type="InterPro" id="IPR007123">
    <property type="entry name" value="Gelsolin-like_dom"/>
</dbReference>
<dbReference type="InterPro" id="IPR036180">
    <property type="entry name" value="Gelsolin-like_dom_sf"/>
</dbReference>
<dbReference type="InterPro" id="IPR007122">
    <property type="entry name" value="Villin/Gelsolin"/>
</dbReference>
<dbReference type="InterPro" id="IPR003128">
    <property type="entry name" value="Villin_headpiece"/>
</dbReference>
<dbReference type="InterPro" id="IPR036886">
    <property type="entry name" value="Villin_headpiece_dom_sf"/>
</dbReference>
<dbReference type="PANTHER" id="PTHR11977">
    <property type="entry name" value="VILLIN"/>
    <property type="match status" value="1"/>
</dbReference>
<dbReference type="PANTHER" id="PTHR11977:SF57">
    <property type="entry name" value="VILLIN-LIKE PROTEIN QUAIL"/>
    <property type="match status" value="1"/>
</dbReference>
<dbReference type="Pfam" id="PF00626">
    <property type="entry name" value="Gelsolin"/>
    <property type="match status" value="2"/>
</dbReference>
<dbReference type="Pfam" id="PF02209">
    <property type="entry name" value="VHP"/>
    <property type="match status" value="1"/>
</dbReference>
<dbReference type="PRINTS" id="PR00597">
    <property type="entry name" value="GELSOLIN"/>
</dbReference>
<dbReference type="SMART" id="SM00262">
    <property type="entry name" value="GEL"/>
    <property type="match status" value="6"/>
</dbReference>
<dbReference type="SMART" id="SM00153">
    <property type="entry name" value="VHP"/>
    <property type="match status" value="1"/>
</dbReference>
<dbReference type="SUPFAM" id="SSF55753">
    <property type="entry name" value="Actin depolymerizing proteins"/>
    <property type="match status" value="5"/>
</dbReference>
<dbReference type="SUPFAM" id="SSF82754">
    <property type="entry name" value="C-terminal, gelsolin-like domain of Sec23/24"/>
    <property type="match status" value="1"/>
</dbReference>
<dbReference type="SUPFAM" id="SSF47050">
    <property type="entry name" value="VHP, Villin headpiece domain"/>
    <property type="match status" value="1"/>
</dbReference>
<dbReference type="PROSITE" id="PS51089">
    <property type="entry name" value="HP"/>
    <property type="match status" value="1"/>
</dbReference>
<reference key="1">
    <citation type="journal article" date="1994" name="Cell">
        <title>The villin-like protein encoded by the Drosophila quail gene is required for actin bundle assembly during oogenesis.</title>
        <authorList>
            <person name="Mahajan-Miklos S."/>
            <person name="Cooley L."/>
        </authorList>
    </citation>
    <scope>NUCLEOTIDE SEQUENCE [MRNA] (ISOFORM A)</scope>
    <scope>FUNCTION</scope>
    <scope>TISSUE SPECIFICITY</scope>
</reference>
<reference key="2">
    <citation type="journal article" date="2000" name="Science">
        <title>The genome sequence of Drosophila melanogaster.</title>
        <authorList>
            <person name="Adams M.D."/>
            <person name="Celniker S.E."/>
            <person name="Holt R.A."/>
            <person name="Evans C.A."/>
            <person name="Gocayne J.D."/>
            <person name="Amanatides P.G."/>
            <person name="Scherer S.E."/>
            <person name="Li P.W."/>
            <person name="Hoskins R.A."/>
            <person name="Galle R.F."/>
            <person name="George R.A."/>
            <person name="Lewis S.E."/>
            <person name="Richards S."/>
            <person name="Ashburner M."/>
            <person name="Henderson S.N."/>
            <person name="Sutton G.G."/>
            <person name="Wortman J.R."/>
            <person name="Yandell M.D."/>
            <person name="Zhang Q."/>
            <person name="Chen L.X."/>
            <person name="Brandon R.C."/>
            <person name="Rogers Y.-H.C."/>
            <person name="Blazej R.G."/>
            <person name="Champe M."/>
            <person name="Pfeiffer B.D."/>
            <person name="Wan K.H."/>
            <person name="Doyle C."/>
            <person name="Baxter E.G."/>
            <person name="Helt G."/>
            <person name="Nelson C.R."/>
            <person name="Miklos G.L.G."/>
            <person name="Abril J.F."/>
            <person name="Agbayani A."/>
            <person name="An H.-J."/>
            <person name="Andrews-Pfannkoch C."/>
            <person name="Baldwin D."/>
            <person name="Ballew R.M."/>
            <person name="Basu A."/>
            <person name="Baxendale J."/>
            <person name="Bayraktaroglu L."/>
            <person name="Beasley E.M."/>
            <person name="Beeson K.Y."/>
            <person name="Benos P.V."/>
            <person name="Berman B.P."/>
            <person name="Bhandari D."/>
            <person name="Bolshakov S."/>
            <person name="Borkova D."/>
            <person name="Botchan M.R."/>
            <person name="Bouck J."/>
            <person name="Brokstein P."/>
            <person name="Brottier P."/>
            <person name="Burtis K.C."/>
            <person name="Busam D.A."/>
            <person name="Butler H."/>
            <person name="Cadieu E."/>
            <person name="Center A."/>
            <person name="Chandra I."/>
            <person name="Cherry J.M."/>
            <person name="Cawley S."/>
            <person name="Dahlke C."/>
            <person name="Davenport L.B."/>
            <person name="Davies P."/>
            <person name="de Pablos B."/>
            <person name="Delcher A."/>
            <person name="Deng Z."/>
            <person name="Mays A.D."/>
            <person name="Dew I."/>
            <person name="Dietz S.M."/>
            <person name="Dodson K."/>
            <person name="Doup L.E."/>
            <person name="Downes M."/>
            <person name="Dugan-Rocha S."/>
            <person name="Dunkov B.C."/>
            <person name="Dunn P."/>
            <person name="Durbin K.J."/>
            <person name="Evangelista C.C."/>
            <person name="Ferraz C."/>
            <person name="Ferriera S."/>
            <person name="Fleischmann W."/>
            <person name="Fosler C."/>
            <person name="Gabrielian A.E."/>
            <person name="Garg N.S."/>
            <person name="Gelbart W.M."/>
            <person name="Glasser K."/>
            <person name="Glodek A."/>
            <person name="Gong F."/>
            <person name="Gorrell J.H."/>
            <person name="Gu Z."/>
            <person name="Guan P."/>
            <person name="Harris M."/>
            <person name="Harris N.L."/>
            <person name="Harvey D.A."/>
            <person name="Heiman T.J."/>
            <person name="Hernandez J.R."/>
            <person name="Houck J."/>
            <person name="Hostin D."/>
            <person name="Houston K.A."/>
            <person name="Howland T.J."/>
            <person name="Wei M.-H."/>
            <person name="Ibegwam C."/>
            <person name="Jalali M."/>
            <person name="Kalush F."/>
            <person name="Karpen G.H."/>
            <person name="Ke Z."/>
            <person name="Kennison J.A."/>
            <person name="Ketchum K.A."/>
            <person name="Kimmel B.E."/>
            <person name="Kodira C.D."/>
            <person name="Kraft C.L."/>
            <person name="Kravitz S."/>
            <person name="Kulp D."/>
            <person name="Lai Z."/>
            <person name="Lasko P."/>
            <person name="Lei Y."/>
            <person name="Levitsky A.A."/>
            <person name="Li J.H."/>
            <person name="Li Z."/>
            <person name="Liang Y."/>
            <person name="Lin X."/>
            <person name="Liu X."/>
            <person name="Mattei B."/>
            <person name="McIntosh T.C."/>
            <person name="McLeod M.P."/>
            <person name="McPherson D."/>
            <person name="Merkulov G."/>
            <person name="Milshina N.V."/>
            <person name="Mobarry C."/>
            <person name="Morris J."/>
            <person name="Moshrefi A."/>
            <person name="Mount S.M."/>
            <person name="Moy M."/>
            <person name="Murphy B."/>
            <person name="Murphy L."/>
            <person name="Muzny D.M."/>
            <person name="Nelson D.L."/>
            <person name="Nelson D.R."/>
            <person name="Nelson K.A."/>
            <person name="Nixon K."/>
            <person name="Nusskern D.R."/>
            <person name="Pacleb J.M."/>
            <person name="Palazzolo M."/>
            <person name="Pittman G.S."/>
            <person name="Pan S."/>
            <person name="Pollard J."/>
            <person name="Puri V."/>
            <person name="Reese M.G."/>
            <person name="Reinert K."/>
            <person name="Remington K."/>
            <person name="Saunders R.D.C."/>
            <person name="Scheeler F."/>
            <person name="Shen H."/>
            <person name="Shue B.C."/>
            <person name="Siden-Kiamos I."/>
            <person name="Simpson M."/>
            <person name="Skupski M.P."/>
            <person name="Smith T.J."/>
            <person name="Spier E."/>
            <person name="Spradling A.C."/>
            <person name="Stapleton M."/>
            <person name="Strong R."/>
            <person name="Sun E."/>
            <person name="Svirskas R."/>
            <person name="Tector C."/>
            <person name="Turner R."/>
            <person name="Venter E."/>
            <person name="Wang A.H."/>
            <person name="Wang X."/>
            <person name="Wang Z.-Y."/>
            <person name="Wassarman D.A."/>
            <person name="Weinstock G.M."/>
            <person name="Weissenbach J."/>
            <person name="Williams S.M."/>
            <person name="Woodage T."/>
            <person name="Worley K.C."/>
            <person name="Wu D."/>
            <person name="Yang S."/>
            <person name="Yao Q.A."/>
            <person name="Ye J."/>
            <person name="Yeh R.-F."/>
            <person name="Zaveri J.S."/>
            <person name="Zhan M."/>
            <person name="Zhang G."/>
            <person name="Zhao Q."/>
            <person name="Zheng L."/>
            <person name="Zheng X.H."/>
            <person name="Zhong F.N."/>
            <person name="Zhong W."/>
            <person name="Zhou X."/>
            <person name="Zhu S.C."/>
            <person name="Zhu X."/>
            <person name="Smith H.O."/>
            <person name="Gibbs R.A."/>
            <person name="Myers E.W."/>
            <person name="Rubin G.M."/>
            <person name="Venter J.C."/>
        </authorList>
    </citation>
    <scope>NUCLEOTIDE SEQUENCE [LARGE SCALE GENOMIC DNA]</scope>
    <source>
        <strain>Berkeley</strain>
    </source>
</reference>
<reference key="3">
    <citation type="journal article" date="2002" name="Genome Biol.">
        <title>Annotation of the Drosophila melanogaster euchromatic genome: a systematic review.</title>
        <authorList>
            <person name="Misra S."/>
            <person name="Crosby M.A."/>
            <person name="Mungall C.J."/>
            <person name="Matthews B.B."/>
            <person name="Campbell K.S."/>
            <person name="Hradecky P."/>
            <person name="Huang Y."/>
            <person name="Kaminker J.S."/>
            <person name="Millburn G.H."/>
            <person name="Prochnik S.E."/>
            <person name="Smith C.D."/>
            <person name="Tupy J.L."/>
            <person name="Whitfield E.J."/>
            <person name="Bayraktaroglu L."/>
            <person name="Berman B.P."/>
            <person name="Bettencourt B.R."/>
            <person name="Celniker S.E."/>
            <person name="de Grey A.D.N.J."/>
            <person name="Drysdale R.A."/>
            <person name="Harris N.L."/>
            <person name="Richter J."/>
            <person name="Russo S."/>
            <person name="Schroeder A.J."/>
            <person name="Shu S.Q."/>
            <person name="Stapleton M."/>
            <person name="Yamada C."/>
            <person name="Ashburner M."/>
            <person name="Gelbart W.M."/>
            <person name="Rubin G.M."/>
            <person name="Lewis S.E."/>
        </authorList>
    </citation>
    <scope>GENOME REANNOTATION</scope>
    <scope>ALTERNATIVE SPLICING</scope>
    <source>
        <strain>Berkeley</strain>
    </source>
</reference>
<reference key="4">
    <citation type="journal article" date="2002" name="Genome Biol.">
        <title>A Drosophila full-length cDNA resource.</title>
        <authorList>
            <person name="Stapleton M."/>
            <person name="Carlson J.W."/>
            <person name="Brokstein P."/>
            <person name="Yu C."/>
            <person name="Champe M."/>
            <person name="George R.A."/>
            <person name="Guarin H."/>
            <person name="Kronmiller B."/>
            <person name="Pacleb J.M."/>
            <person name="Park S."/>
            <person name="Wan K.H."/>
            <person name="Rubin G.M."/>
            <person name="Celniker S.E."/>
        </authorList>
    </citation>
    <scope>NUCLEOTIDE SEQUENCE [LARGE SCALE MRNA] (ISOFORM A)</scope>
    <source>
        <strain>Berkeley</strain>
        <tissue>Embryo</tissue>
    </source>
</reference>
<keyword id="KW-0117">Actin capping</keyword>
<keyword id="KW-0009">Actin-binding</keyword>
<keyword id="KW-0025">Alternative splicing</keyword>
<keyword id="KW-0217">Developmental protein</keyword>
<keyword id="KW-0221">Differentiation</keyword>
<keyword id="KW-0896">Oogenesis</keyword>
<keyword id="KW-1185">Reference proteome</keyword>
<comment type="function">
    <text evidence="2">Required for the formation of cytoplasmic actin filament bundles in nurse cells, possibly by regulating both the polymerization and organization of actin filaments. Mutations in quail result in female sterility due to the disruption of cytoplasmic transport from the nurse cells into the oocyte late in oogenesis.</text>
</comment>
<comment type="alternative products">
    <event type="alternative splicing"/>
    <isoform>
        <id>Q23989-1</id>
        <name>B</name>
        <sequence type="displayed"/>
    </isoform>
    <isoform>
        <id>Q23989-2</id>
        <name>A</name>
        <sequence type="described" ref="VSP_034369"/>
    </isoform>
</comment>
<comment type="tissue specificity">
    <text evidence="2">Germline specific in adult flies.</text>
</comment>
<comment type="similarity">
    <text evidence="5">Belongs to the villin/gelsolin family.</text>
</comment>